<dbReference type="EC" id="1.1.1.267" evidence="1"/>
<dbReference type="EMBL" id="AE017333">
    <property type="protein sequence ID" value="AAU40771.1"/>
    <property type="molecule type" value="Genomic_DNA"/>
</dbReference>
<dbReference type="EMBL" id="CP000002">
    <property type="protein sequence ID" value="AAU23411.1"/>
    <property type="molecule type" value="Genomic_DNA"/>
</dbReference>
<dbReference type="RefSeq" id="WP_003181846.1">
    <property type="nucleotide sequence ID" value="NC_006322.1"/>
</dbReference>
<dbReference type="SMR" id="Q65JJ3"/>
<dbReference type="STRING" id="279010.BL01237"/>
<dbReference type="GeneID" id="92861531"/>
<dbReference type="KEGG" id="bld:BLi01876"/>
<dbReference type="KEGG" id="bli:BL01237"/>
<dbReference type="eggNOG" id="COG0743">
    <property type="taxonomic scope" value="Bacteria"/>
</dbReference>
<dbReference type="HOGENOM" id="CLU_035714_4_0_9"/>
<dbReference type="UniPathway" id="UPA00056">
    <property type="reaction ID" value="UER00092"/>
</dbReference>
<dbReference type="Proteomes" id="UP000000606">
    <property type="component" value="Chromosome"/>
</dbReference>
<dbReference type="GO" id="GO:0030604">
    <property type="term" value="F:1-deoxy-D-xylulose-5-phosphate reductoisomerase activity"/>
    <property type="evidence" value="ECO:0007669"/>
    <property type="project" value="UniProtKB-UniRule"/>
</dbReference>
<dbReference type="GO" id="GO:0030145">
    <property type="term" value="F:manganese ion binding"/>
    <property type="evidence" value="ECO:0007669"/>
    <property type="project" value="TreeGrafter"/>
</dbReference>
<dbReference type="GO" id="GO:0070402">
    <property type="term" value="F:NADPH binding"/>
    <property type="evidence" value="ECO:0007669"/>
    <property type="project" value="InterPro"/>
</dbReference>
<dbReference type="GO" id="GO:0051484">
    <property type="term" value="P:isopentenyl diphosphate biosynthetic process, methylerythritol 4-phosphate pathway involved in terpenoid biosynthetic process"/>
    <property type="evidence" value="ECO:0007669"/>
    <property type="project" value="TreeGrafter"/>
</dbReference>
<dbReference type="FunFam" id="3.40.50.720:FF:000045">
    <property type="entry name" value="1-deoxy-D-xylulose 5-phosphate reductoisomerase"/>
    <property type="match status" value="1"/>
</dbReference>
<dbReference type="Gene3D" id="1.10.1740.10">
    <property type="match status" value="1"/>
</dbReference>
<dbReference type="Gene3D" id="3.40.50.720">
    <property type="entry name" value="NAD(P)-binding Rossmann-like Domain"/>
    <property type="match status" value="1"/>
</dbReference>
<dbReference type="HAMAP" id="MF_00183">
    <property type="entry name" value="DXP_reductoisom"/>
    <property type="match status" value="1"/>
</dbReference>
<dbReference type="InterPro" id="IPR003821">
    <property type="entry name" value="DXP_reductoisomerase"/>
</dbReference>
<dbReference type="InterPro" id="IPR013644">
    <property type="entry name" value="DXP_reductoisomerase_C"/>
</dbReference>
<dbReference type="InterPro" id="IPR013512">
    <property type="entry name" value="DXP_reductoisomerase_N"/>
</dbReference>
<dbReference type="InterPro" id="IPR026877">
    <property type="entry name" value="DXPR_C"/>
</dbReference>
<dbReference type="InterPro" id="IPR036169">
    <property type="entry name" value="DXPR_C_sf"/>
</dbReference>
<dbReference type="InterPro" id="IPR036291">
    <property type="entry name" value="NAD(P)-bd_dom_sf"/>
</dbReference>
<dbReference type="NCBIfam" id="TIGR00243">
    <property type="entry name" value="Dxr"/>
    <property type="match status" value="1"/>
</dbReference>
<dbReference type="NCBIfam" id="NF009114">
    <property type="entry name" value="PRK12464.1"/>
    <property type="match status" value="1"/>
</dbReference>
<dbReference type="PANTHER" id="PTHR30525">
    <property type="entry name" value="1-DEOXY-D-XYLULOSE 5-PHOSPHATE REDUCTOISOMERASE"/>
    <property type="match status" value="1"/>
</dbReference>
<dbReference type="PANTHER" id="PTHR30525:SF0">
    <property type="entry name" value="1-DEOXY-D-XYLULOSE 5-PHOSPHATE REDUCTOISOMERASE, CHLOROPLASTIC"/>
    <property type="match status" value="1"/>
</dbReference>
<dbReference type="Pfam" id="PF08436">
    <property type="entry name" value="DXP_redisom_C"/>
    <property type="match status" value="1"/>
</dbReference>
<dbReference type="Pfam" id="PF02670">
    <property type="entry name" value="DXP_reductoisom"/>
    <property type="match status" value="1"/>
</dbReference>
<dbReference type="Pfam" id="PF13288">
    <property type="entry name" value="DXPR_C"/>
    <property type="match status" value="1"/>
</dbReference>
<dbReference type="PIRSF" id="PIRSF006205">
    <property type="entry name" value="Dxp_reductismrs"/>
    <property type="match status" value="1"/>
</dbReference>
<dbReference type="SUPFAM" id="SSF69055">
    <property type="entry name" value="1-deoxy-D-xylulose-5-phosphate reductoisomerase, C-terminal domain"/>
    <property type="match status" value="1"/>
</dbReference>
<dbReference type="SUPFAM" id="SSF55347">
    <property type="entry name" value="Glyceraldehyde-3-phosphate dehydrogenase-like, C-terminal domain"/>
    <property type="match status" value="1"/>
</dbReference>
<dbReference type="SUPFAM" id="SSF51735">
    <property type="entry name" value="NAD(P)-binding Rossmann-fold domains"/>
    <property type="match status" value="1"/>
</dbReference>
<reference key="1">
    <citation type="journal article" date="2004" name="J. Mol. Microbiol. Biotechnol.">
        <title>The complete genome sequence of Bacillus licheniformis DSM13, an organism with great industrial potential.</title>
        <authorList>
            <person name="Veith B."/>
            <person name="Herzberg C."/>
            <person name="Steckel S."/>
            <person name="Feesche J."/>
            <person name="Maurer K.H."/>
            <person name="Ehrenreich P."/>
            <person name="Baeumer S."/>
            <person name="Henne A."/>
            <person name="Liesegang H."/>
            <person name="Merkl R."/>
            <person name="Ehrenreich A."/>
            <person name="Gottschalk G."/>
        </authorList>
    </citation>
    <scope>NUCLEOTIDE SEQUENCE [LARGE SCALE GENOMIC DNA]</scope>
    <source>
        <strain>ATCC 14580 / DSM 13 / JCM 2505 / CCUG 7422 / NBRC 12200 / NCIMB 9375 / NCTC 10341 / NRRL NRS-1264 / Gibson 46</strain>
    </source>
</reference>
<reference key="2">
    <citation type="journal article" date="2004" name="Genome Biol.">
        <title>Complete genome sequence of the industrial bacterium Bacillus licheniformis and comparisons with closely related Bacillus species.</title>
        <authorList>
            <person name="Rey M.W."/>
            <person name="Ramaiya P."/>
            <person name="Nelson B.A."/>
            <person name="Brody-Karpin S.D."/>
            <person name="Zaretsky E.J."/>
            <person name="Tang M."/>
            <person name="Lopez de Leon A."/>
            <person name="Xiang H."/>
            <person name="Gusti V."/>
            <person name="Clausen I.G."/>
            <person name="Olsen P.B."/>
            <person name="Rasmussen M.D."/>
            <person name="Andersen J.T."/>
            <person name="Joergensen P.L."/>
            <person name="Larsen T.S."/>
            <person name="Sorokin A."/>
            <person name="Bolotin A."/>
            <person name="Lapidus A."/>
            <person name="Galleron N."/>
            <person name="Ehrlich S.D."/>
            <person name="Berka R.M."/>
        </authorList>
    </citation>
    <scope>NUCLEOTIDE SEQUENCE [LARGE SCALE GENOMIC DNA]</scope>
    <source>
        <strain>ATCC 14580 / DSM 13 / JCM 2505 / CCUG 7422 / NBRC 12200 / NCIMB 9375 / NCTC 10341 / NRRL NRS-1264 / Gibson 46</strain>
    </source>
</reference>
<proteinExistence type="inferred from homology"/>
<evidence type="ECO:0000255" key="1">
    <source>
        <dbReference type="HAMAP-Rule" id="MF_00183"/>
    </source>
</evidence>
<organism>
    <name type="scientific">Bacillus licheniformis (strain ATCC 14580 / DSM 13 / JCM 2505 / CCUG 7422 / NBRC 12200 / NCIMB 9375 / NCTC 10341 / NRRL NRS-1264 / Gibson 46)</name>
    <dbReference type="NCBI Taxonomy" id="279010"/>
    <lineage>
        <taxon>Bacteria</taxon>
        <taxon>Bacillati</taxon>
        <taxon>Bacillota</taxon>
        <taxon>Bacilli</taxon>
        <taxon>Bacillales</taxon>
        <taxon>Bacillaceae</taxon>
        <taxon>Bacillus</taxon>
    </lineage>
</organism>
<keyword id="KW-0414">Isoprene biosynthesis</keyword>
<keyword id="KW-0464">Manganese</keyword>
<keyword id="KW-0479">Metal-binding</keyword>
<keyword id="KW-0521">NADP</keyword>
<keyword id="KW-0560">Oxidoreductase</keyword>
<keyword id="KW-1185">Reference proteome</keyword>
<gene>
    <name evidence="1" type="primary">dxr</name>
    <name type="ordered locus">BLi01876</name>
    <name type="ordered locus">BL01237</name>
</gene>
<sequence length="383" mass="42594">MKNICLLGATGSIGEQTLDVIKAHDDKFRLTAMTFGKNAEKAAEIIETFKPKYVGVGDEHTYETLKQHSFSYTFKTGIGEEALIEAAVIPEADIVVNALVGSVGLLPTLKAMEHKKTIALANKETLVTAGHIVKEHAQKYDVPLLPVDSEHSAIFQALQGENPKHIKRLIVTASGGSFRDRTRRELEGVTVEEALNHPNWSMGAKITIDSATMMNKGLEVIEAHWLFDLPYDQIDVLLHKESIIHSMVEFHDRSVIAQLGTPDMRVPIQYALSHPERLPFNEAKSLDLWEVGQLNFAQADFERFRCLQFAYESGKIGGTMPTVLNAANEEAVAAFLSGRISFLGIEDIIEKALERHQVIAKPSLQEIREVDKDARKFVQTLLT</sequence>
<comment type="function">
    <text evidence="1">Catalyzes the NADPH-dependent rearrangement and reduction of 1-deoxy-D-xylulose-5-phosphate (DXP) to 2-C-methyl-D-erythritol 4-phosphate (MEP).</text>
</comment>
<comment type="catalytic activity">
    <reaction evidence="1">
        <text>2-C-methyl-D-erythritol 4-phosphate + NADP(+) = 1-deoxy-D-xylulose 5-phosphate + NADPH + H(+)</text>
        <dbReference type="Rhea" id="RHEA:13717"/>
        <dbReference type="ChEBI" id="CHEBI:15378"/>
        <dbReference type="ChEBI" id="CHEBI:57783"/>
        <dbReference type="ChEBI" id="CHEBI:57792"/>
        <dbReference type="ChEBI" id="CHEBI:58262"/>
        <dbReference type="ChEBI" id="CHEBI:58349"/>
        <dbReference type="EC" id="1.1.1.267"/>
    </reaction>
    <physiologicalReaction direction="right-to-left" evidence="1">
        <dbReference type="Rhea" id="RHEA:13719"/>
    </physiologicalReaction>
</comment>
<comment type="cofactor">
    <cofactor evidence="1">
        <name>Mg(2+)</name>
        <dbReference type="ChEBI" id="CHEBI:18420"/>
    </cofactor>
    <cofactor evidence="1">
        <name>Mn(2+)</name>
        <dbReference type="ChEBI" id="CHEBI:29035"/>
    </cofactor>
</comment>
<comment type="pathway">
    <text evidence="1">Isoprenoid biosynthesis; isopentenyl diphosphate biosynthesis via DXP pathway; isopentenyl diphosphate from 1-deoxy-D-xylulose 5-phosphate: step 1/6.</text>
</comment>
<comment type="similarity">
    <text evidence="1">Belongs to the DXR family.</text>
</comment>
<accession>Q65JJ3</accession>
<accession>Q62UZ8</accession>
<protein>
    <recommendedName>
        <fullName evidence="1">1-deoxy-D-xylulose 5-phosphate reductoisomerase</fullName>
        <shortName evidence="1">DXP reductoisomerase</shortName>
        <ecNumber evidence="1">1.1.1.267</ecNumber>
    </recommendedName>
    <alternativeName>
        <fullName evidence="1">1-deoxyxylulose-5-phosphate reductoisomerase</fullName>
    </alternativeName>
    <alternativeName>
        <fullName evidence="1">2-C-methyl-D-erythritol 4-phosphate synthase</fullName>
    </alternativeName>
</protein>
<name>DXR_BACLD</name>
<feature type="chain" id="PRO_0000163609" description="1-deoxy-D-xylulose 5-phosphate reductoisomerase">
    <location>
        <begin position="1"/>
        <end position="383"/>
    </location>
</feature>
<feature type="binding site" evidence="1">
    <location>
        <position position="10"/>
    </location>
    <ligand>
        <name>NADPH</name>
        <dbReference type="ChEBI" id="CHEBI:57783"/>
    </ligand>
</feature>
<feature type="binding site" evidence="1">
    <location>
        <position position="11"/>
    </location>
    <ligand>
        <name>NADPH</name>
        <dbReference type="ChEBI" id="CHEBI:57783"/>
    </ligand>
</feature>
<feature type="binding site" evidence="1">
    <location>
        <position position="12"/>
    </location>
    <ligand>
        <name>NADPH</name>
        <dbReference type="ChEBI" id="CHEBI:57783"/>
    </ligand>
</feature>
<feature type="binding site" evidence="1">
    <location>
        <position position="13"/>
    </location>
    <ligand>
        <name>NADPH</name>
        <dbReference type="ChEBI" id="CHEBI:57783"/>
    </ligand>
</feature>
<feature type="binding site" evidence="1">
    <location>
        <position position="36"/>
    </location>
    <ligand>
        <name>NADPH</name>
        <dbReference type="ChEBI" id="CHEBI:57783"/>
    </ligand>
</feature>
<feature type="binding site" evidence="1">
    <location>
        <position position="37"/>
    </location>
    <ligand>
        <name>NADPH</name>
        <dbReference type="ChEBI" id="CHEBI:57783"/>
    </ligand>
</feature>
<feature type="binding site" evidence="1">
    <location>
        <position position="38"/>
    </location>
    <ligand>
        <name>NADPH</name>
        <dbReference type="ChEBI" id="CHEBI:57783"/>
    </ligand>
</feature>
<feature type="binding site" evidence="1">
    <location>
        <position position="122"/>
    </location>
    <ligand>
        <name>NADPH</name>
        <dbReference type="ChEBI" id="CHEBI:57783"/>
    </ligand>
</feature>
<feature type="binding site" evidence="1">
    <location>
        <position position="123"/>
    </location>
    <ligand>
        <name>1-deoxy-D-xylulose 5-phosphate</name>
        <dbReference type="ChEBI" id="CHEBI:57792"/>
    </ligand>
</feature>
<feature type="binding site" evidence="1">
    <location>
        <position position="124"/>
    </location>
    <ligand>
        <name>NADPH</name>
        <dbReference type="ChEBI" id="CHEBI:57783"/>
    </ligand>
</feature>
<feature type="binding site" evidence="1">
    <location>
        <position position="148"/>
    </location>
    <ligand>
        <name>Mn(2+)</name>
        <dbReference type="ChEBI" id="CHEBI:29035"/>
    </ligand>
</feature>
<feature type="binding site" evidence="1">
    <location>
        <position position="149"/>
    </location>
    <ligand>
        <name>1-deoxy-D-xylulose 5-phosphate</name>
        <dbReference type="ChEBI" id="CHEBI:57792"/>
    </ligand>
</feature>
<feature type="binding site" evidence="1">
    <location>
        <position position="150"/>
    </location>
    <ligand>
        <name>1-deoxy-D-xylulose 5-phosphate</name>
        <dbReference type="ChEBI" id="CHEBI:57792"/>
    </ligand>
</feature>
<feature type="binding site" evidence="1">
    <location>
        <position position="150"/>
    </location>
    <ligand>
        <name>Mn(2+)</name>
        <dbReference type="ChEBI" id="CHEBI:29035"/>
    </ligand>
</feature>
<feature type="binding site" evidence="1">
    <location>
        <position position="174"/>
    </location>
    <ligand>
        <name>1-deoxy-D-xylulose 5-phosphate</name>
        <dbReference type="ChEBI" id="CHEBI:57792"/>
    </ligand>
</feature>
<feature type="binding site" evidence="1">
    <location>
        <position position="197"/>
    </location>
    <ligand>
        <name>1-deoxy-D-xylulose 5-phosphate</name>
        <dbReference type="ChEBI" id="CHEBI:57792"/>
    </ligand>
</feature>
<feature type="binding site" evidence="1">
    <location>
        <position position="203"/>
    </location>
    <ligand>
        <name>NADPH</name>
        <dbReference type="ChEBI" id="CHEBI:57783"/>
    </ligand>
</feature>
<feature type="binding site" evidence="1">
    <location>
        <position position="210"/>
    </location>
    <ligand>
        <name>1-deoxy-D-xylulose 5-phosphate</name>
        <dbReference type="ChEBI" id="CHEBI:57792"/>
    </ligand>
</feature>
<feature type="binding site" evidence="1">
    <location>
        <position position="215"/>
    </location>
    <ligand>
        <name>1-deoxy-D-xylulose 5-phosphate</name>
        <dbReference type="ChEBI" id="CHEBI:57792"/>
    </ligand>
</feature>
<feature type="binding site" evidence="1">
    <location>
        <position position="216"/>
    </location>
    <ligand>
        <name>1-deoxy-D-xylulose 5-phosphate</name>
        <dbReference type="ChEBI" id="CHEBI:57792"/>
    </ligand>
</feature>
<feature type="binding site" evidence="1">
    <location>
        <position position="219"/>
    </location>
    <ligand>
        <name>1-deoxy-D-xylulose 5-phosphate</name>
        <dbReference type="ChEBI" id="CHEBI:57792"/>
    </ligand>
</feature>
<feature type="binding site" evidence="1">
    <location>
        <position position="219"/>
    </location>
    <ligand>
        <name>Mn(2+)</name>
        <dbReference type="ChEBI" id="CHEBI:29035"/>
    </ligand>
</feature>